<feature type="chain" id="PRO_0000153916" description="Putative adenylate kinase">
    <location>
        <begin position="1"/>
        <end position="188"/>
    </location>
</feature>
<feature type="region of interest" description="NMP" evidence="1">
    <location>
        <begin position="30"/>
        <end position="53"/>
    </location>
</feature>
<feature type="region of interest" description="LID" evidence="1">
    <location>
        <begin position="103"/>
        <end position="113"/>
    </location>
</feature>
<feature type="binding site" evidence="1">
    <location>
        <position position="10"/>
    </location>
    <ligand>
        <name>ATP</name>
        <dbReference type="ChEBI" id="CHEBI:30616"/>
    </ligand>
</feature>
<feature type="binding site" evidence="1">
    <location>
        <position position="12"/>
    </location>
    <ligand>
        <name>ATP</name>
        <dbReference type="ChEBI" id="CHEBI:30616"/>
    </ligand>
</feature>
<feature type="binding site" evidence="1">
    <location>
        <position position="13"/>
    </location>
    <ligand>
        <name>ATP</name>
        <dbReference type="ChEBI" id="CHEBI:30616"/>
    </ligand>
</feature>
<feature type="binding site" evidence="1">
    <location>
        <position position="14"/>
    </location>
    <ligand>
        <name>ATP</name>
        <dbReference type="ChEBI" id="CHEBI:30616"/>
    </ligand>
</feature>
<feature type="binding site" evidence="1">
    <location>
        <position position="15"/>
    </location>
    <ligand>
        <name>ATP</name>
        <dbReference type="ChEBI" id="CHEBI:30616"/>
    </ligand>
</feature>
<feature type="binding site" evidence="1">
    <location>
        <position position="104"/>
    </location>
    <ligand>
        <name>ATP</name>
        <dbReference type="ChEBI" id="CHEBI:30616"/>
    </ligand>
</feature>
<feature type="binding site" evidence="1">
    <location>
        <position position="142"/>
    </location>
    <ligand>
        <name>ATP</name>
        <dbReference type="ChEBI" id="CHEBI:30616"/>
    </ligand>
</feature>
<proteinExistence type="inferred from homology"/>
<reference key="1">
    <citation type="journal article" date="2001" name="DNA Res.">
        <title>Complete genome sequence of an aerobic thermoacidophilic Crenarchaeon, Sulfolobus tokodaii strain7.</title>
        <authorList>
            <person name="Kawarabayasi Y."/>
            <person name="Hino Y."/>
            <person name="Horikawa H."/>
            <person name="Jin-no K."/>
            <person name="Takahashi M."/>
            <person name="Sekine M."/>
            <person name="Baba S."/>
            <person name="Ankai A."/>
            <person name="Kosugi H."/>
            <person name="Hosoyama A."/>
            <person name="Fukui S."/>
            <person name="Nagai Y."/>
            <person name="Nishijima K."/>
            <person name="Otsuka R."/>
            <person name="Nakazawa H."/>
            <person name="Takamiya M."/>
            <person name="Kato Y."/>
            <person name="Yoshizawa T."/>
            <person name="Tanaka T."/>
            <person name="Kudoh Y."/>
            <person name="Yamazaki J."/>
            <person name="Kushida N."/>
            <person name="Oguchi A."/>
            <person name="Aoki K."/>
            <person name="Masuda S."/>
            <person name="Yanagii M."/>
            <person name="Nishimura M."/>
            <person name="Yamagishi A."/>
            <person name="Oshima T."/>
            <person name="Kikuchi H."/>
        </authorList>
    </citation>
    <scope>NUCLEOTIDE SEQUENCE [LARGE SCALE GENOMIC DNA]</scope>
    <source>
        <strain>DSM 16993 / JCM 10545 / NBRC 100140 / 7</strain>
    </source>
</reference>
<sequence>MIIIITGTPGSGKSTIVDLLSKKLGFEKLHVSSFLIQNKAFSEYDELRQSYVIDEEKAFQLIDSFIKDKNVVIETIYPSLISHADKVIVLRKDPRVLYTELKRRGWGELKIAENVMAEILGVISGEAKEYFGNICEINVTNKKPEEVVEQILSNNCDNVDWLNIEEIQDLLISLDKVISSYEDSISDE</sequence>
<name>KAD6_SULTO</name>
<accession>Q976L5</accession>
<dbReference type="EC" id="2.7.4.3" evidence="1"/>
<dbReference type="EMBL" id="BA000023">
    <property type="protein sequence ID" value="BAB65132.1"/>
    <property type="molecule type" value="Genomic_DNA"/>
</dbReference>
<dbReference type="RefSeq" id="WP_010978114.1">
    <property type="nucleotide sequence ID" value="NC_003106.2"/>
</dbReference>
<dbReference type="SMR" id="Q976L5"/>
<dbReference type="STRING" id="273063.STK_01760"/>
<dbReference type="GeneID" id="1458058"/>
<dbReference type="KEGG" id="sto:STK_01760"/>
<dbReference type="PATRIC" id="fig|273063.9.peg.215"/>
<dbReference type="eggNOG" id="arCOG01038">
    <property type="taxonomic scope" value="Archaea"/>
</dbReference>
<dbReference type="OrthoDB" id="8730at2157"/>
<dbReference type="Proteomes" id="UP000001015">
    <property type="component" value="Chromosome"/>
</dbReference>
<dbReference type="GO" id="GO:0004017">
    <property type="term" value="F:adenylate kinase activity"/>
    <property type="evidence" value="ECO:0007669"/>
    <property type="project" value="UniProtKB-UniRule"/>
</dbReference>
<dbReference type="GO" id="GO:0005524">
    <property type="term" value="F:ATP binding"/>
    <property type="evidence" value="ECO:0007669"/>
    <property type="project" value="UniProtKB-UniRule"/>
</dbReference>
<dbReference type="GO" id="GO:0016887">
    <property type="term" value="F:ATP hydrolysis activity"/>
    <property type="evidence" value="ECO:0007669"/>
    <property type="project" value="InterPro"/>
</dbReference>
<dbReference type="GO" id="GO:0042274">
    <property type="term" value="P:ribosomal small subunit biogenesis"/>
    <property type="evidence" value="ECO:0007669"/>
    <property type="project" value="UniProtKB-UniRule"/>
</dbReference>
<dbReference type="GO" id="GO:0006364">
    <property type="term" value="P:rRNA processing"/>
    <property type="evidence" value="ECO:0007669"/>
    <property type="project" value="UniProtKB-KW"/>
</dbReference>
<dbReference type="Gene3D" id="3.40.50.300">
    <property type="entry name" value="P-loop containing nucleotide triphosphate hydrolases"/>
    <property type="match status" value="1"/>
</dbReference>
<dbReference type="HAMAP" id="MF_00039">
    <property type="entry name" value="Adenylate_kinase_AK6"/>
    <property type="match status" value="1"/>
</dbReference>
<dbReference type="InterPro" id="IPR020618">
    <property type="entry name" value="Adenyl_kinase_AK6"/>
</dbReference>
<dbReference type="InterPro" id="IPR027417">
    <property type="entry name" value="P-loop_NTPase"/>
</dbReference>
<dbReference type="PANTHER" id="PTHR12595:SF0">
    <property type="entry name" value="ADENYLATE KINASE ISOENZYME 6"/>
    <property type="match status" value="1"/>
</dbReference>
<dbReference type="PANTHER" id="PTHR12595">
    <property type="entry name" value="POS9-ACTIVATING FACTOR FAP7-RELATED"/>
    <property type="match status" value="1"/>
</dbReference>
<dbReference type="Pfam" id="PF13238">
    <property type="entry name" value="AAA_18"/>
    <property type="match status" value="1"/>
</dbReference>
<dbReference type="SUPFAM" id="SSF52540">
    <property type="entry name" value="P-loop containing nucleoside triphosphate hydrolases"/>
    <property type="match status" value="1"/>
</dbReference>
<gene>
    <name type="ordered locus">STK_01760</name>
</gene>
<comment type="function">
    <text evidence="1">Broad-specificity nucleoside monophosphate (NMP) kinase that catalyzes the reversible transfer of the terminal phosphate group between nucleoside triphosphates and monophosphates. Also has ATPase activity. Involved in the late maturation steps of the 30S ribosomal particles, specifically 16S rRNA maturation. While NMP activity is not required for ribosome maturation, ATPase activity is. Associates transiently with small ribosomal subunit protein uS11. ATP hydrolysis breaks the interaction with uS11. May temporarily remove uS11 from the ribosome to enable a conformational change of the ribosomal RNA that is needed for the final maturation step of the small ribosomal subunit.</text>
</comment>
<comment type="catalytic activity">
    <reaction evidence="1">
        <text>AMP + ATP = 2 ADP</text>
        <dbReference type="Rhea" id="RHEA:12973"/>
        <dbReference type="ChEBI" id="CHEBI:30616"/>
        <dbReference type="ChEBI" id="CHEBI:456215"/>
        <dbReference type="ChEBI" id="CHEBI:456216"/>
        <dbReference type="EC" id="2.7.4.3"/>
    </reaction>
</comment>
<comment type="catalytic activity">
    <reaction evidence="1">
        <text>ATP + H2O = ADP + phosphate + H(+)</text>
        <dbReference type="Rhea" id="RHEA:13065"/>
        <dbReference type="ChEBI" id="CHEBI:15377"/>
        <dbReference type="ChEBI" id="CHEBI:15378"/>
        <dbReference type="ChEBI" id="CHEBI:30616"/>
        <dbReference type="ChEBI" id="CHEBI:43474"/>
        <dbReference type="ChEBI" id="CHEBI:456216"/>
    </reaction>
</comment>
<comment type="subunit">
    <text evidence="1">Interacts with uS11. Not a structural component of 40S pre-ribosomes, but transiently interacts with them by binding to uS11.</text>
</comment>
<comment type="similarity">
    <text evidence="1">Belongs to the adenylate kinase family. AK6 subfamily.</text>
</comment>
<evidence type="ECO:0000255" key="1">
    <source>
        <dbReference type="HAMAP-Rule" id="MF_00039"/>
    </source>
</evidence>
<keyword id="KW-0067">ATP-binding</keyword>
<keyword id="KW-0418">Kinase</keyword>
<keyword id="KW-0547">Nucleotide-binding</keyword>
<keyword id="KW-1185">Reference proteome</keyword>
<keyword id="KW-0690">Ribosome biogenesis</keyword>
<keyword id="KW-0698">rRNA processing</keyword>
<keyword id="KW-0808">Transferase</keyword>
<organism>
    <name type="scientific">Sulfurisphaera tokodaii (strain DSM 16993 / JCM 10545 / NBRC 100140 / 7)</name>
    <name type="common">Sulfolobus tokodaii</name>
    <dbReference type="NCBI Taxonomy" id="273063"/>
    <lineage>
        <taxon>Archaea</taxon>
        <taxon>Thermoproteota</taxon>
        <taxon>Thermoprotei</taxon>
        <taxon>Sulfolobales</taxon>
        <taxon>Sulfolobaceae</taxon>
        <taxon>Sulfurisphaera</taxon>
    </lineage>
</organism>
<protein>
    <recommendedName>
        <fullName evidence="1">Putative adenylate kinase</fullName>
        <shortName evidence="1">AK</shortName>
        <ecNumber evidence="1">2.7.4.3</ecNumber>
    </recommendedName>
    <alternativeName>
        <fullName evidence="1">ATP-AMP transphosphorylase</fullName>
    </alternativeName>
</protein>